<evidence type="ECO:0000255" key="1">
    <source>
        <dbReference type="PROSITE-ProRule" id="PRU00340"/>
    </source>
</evidence>
<evidence type="ECO:0000269" key="2">
    <source>
    </source>
</evidence>
<reference key="1">
    <citation type="journal article" date="1997" name="Nature">
        <title>The complete genome sequence of the Gram-positive bacterium Bacillus subtilis.</title>
        <authorList>
            <person name="Kunst F."/>
            <person name="Ogasawara N."/>
            <person name="Moszer I."/>
            <person name="Albertini A.M."/>
            <person name="Alloni G."/>
            <person name="Azevedo V."/>
            <person name="Bertero M.G."/>
            <person name="Bessieres P."/>
            <person name="Bolotin A."/>
            <person name="Borchert S."/>
            <person name="Borriss R."/>
            <person name="Boursier L."/>
            <person name="Brans A."/>
            <person name="Braun M."/>
            <person name="Brignell S.C."/>
            <person name="Bron S."/>
            <person name="Brouillet S."/>
            <person name="Bruschi C.V."/>
            <person name="Caldwell B."/>
            <person name="Capuano V."/>
            <person name="Carter N.M."/>
            <person name="Choi S.-K."/>
            <person name="Codani J.-J."/>
            <person name="Connerton I.F."/>
            <person name="Cummings N.J."/>
            <person name="Daniel R.A."/>
            <person name="Denizot F."/>
            <person name="Devine K.M."/>
            <person name="Duesterhoeft A."/>
            <person name="Ehrlich S.D."/>
            <person name="Emmerson P.T."/>
            <person name="Entian K.-D."/>
            <person name="Errington J."/>
            <person name="Fabret C."/>
            <person name="Ferrari E."/>
            <person name="Foulger D."/>
            <person name="Fritz C."/>
            <person name="Fujita M."/>
            <person name="Fujita Y."/>
            <person name="Fuma S."/>
            <person name="Galizzi A."/>
            <person name="Galleron N."/>
            <person name="Ghim S.-Y."/>
            <person name="Glaser P."/>
            <person name="Goffeau A."/>
            <person name="Golightly E.J."/>
            <person name="Grandi G."/>
            <person name="Guiseppi G."/>
            <person name="Guy B.J."/>
            <person name="Haga K."/>
            <person name="Haiech J."/>
            <person name="Harwood C.R."/>
            <person name="Henaut A."/>
            <person name="Hilbert H."/>
            <person name="Holsappel S."/>
            <person name="Hosono S."/>
            <person name="Hullo M.-F."/>
            <person name="Itaya M."/>
            <person name="Jones L.-M."/>
            <person name="Joris B."/>
            <person name="Karamata D."/>
            <person name="Kasahara Y."/>
            <person name="Klaerr-Blanchard M."/>
            <person name="Klein C."/>
            <person name="Kobayashi Y."/>
            <person name="Koetter P."/>
            <person name="Koningstein G."/>
            <person name="Krogh S."/>
            <person name="Kumano M."/>
            <person name="Kurita K."/>
            <person name="Lapidus A."/>
            <person name="Lardinois S."/>
            <person name="Lauber J."/>
            <person name="Lazarevic V."/>
            <person name="Lee S.-M."/>
            <person name="Levine A."/>
            <person name="Liu H."/>
            <person name="Masuda S."/>
            <person name="Mauel C."/>
            <person name="Medigue C."/>
            <person name="Medina N."/>
            <person name="Mellado R.P."/>
            <person name="Mizuno M."/>
            <person name="Moestl D."/>
            <person name="Nakai S."/>
            <person name="Noback M."/>
            <person name="Noone D."/>
            <person name="O'Reilly M."/>
            <person name="Ogawa K."/>
            <person name="Ogiwara A."/>
            <person name="Oudega B."/>
            <person name="Park S.-H."/>
            <person name="Parro V."/>
            <person name="Pohl T.M."/>
            <person name="Portetelle D."/>
            <person name="Porwollik S."/>
            <person name="Prescott A.M."/>
            <person name="Presecan E."/>
            <person name="Pujic P."/>
            <person name="Purnelle B."/>
            <person name="Rapoport G."/>
            <person name="Rey M."/>
            <person name="Reynolds S."/>
            <person name="Rieger M."/>
            <person name="Rivolta C."/>
            <person name="Rocha E."/>
            <person name="Roche B."/>
            <person name="Rose M."/>
            <person name="Sadaie Y."/>
            <person name="Sato T."/>
            <person name="Scanlan E."/>
            <person name="Schleich S."/>
            <person name="Schroeter R."/>
            <person name="Scoffone F."/>
            <person name="Sekiguchi J."/>
            <person name="Sekowska A."/>
            <person name="Seror S.J."/>
            <person name="Serror P."/>
            <person name="Shin B.-S."/>
            <person name="Soldo B."/>
            <person name="Sorokin A."/>
            <person name="Tacconi E."/>
            <person name="Takagi T."/>
            <person name="Takahashi H."/>
            <person name="Takemaru K."/>
            <person name="Takeuchi M."/>
            <person name="Tamakoshi A."/>
            <person name="Tanaka T."/>
            <person name="Terpstra P."/>
            <person name="Tognoni A."/>
            <person name="Tosato V."/>
            <person name="Uchiyama S."/>
            <person name="Vandenbol M."/>
            <person name="Vannier F."/>
            <person name="Vassarotti A."/>
            <person name="Viari A."/>
            <person name="Wambutt R."/>
            <person name="Wedler E."/>
            <person name="Wedler H."/>
            <person name="Weitzenegger T."/>
            <person name="Winters P."/>
            <person name="Wipat A."/>
            <person name="Yamamoto H."/>
            <person name="Yamane K."/>
            <person name="Yasumoto K."/>
            <person name="Yata K."/>
            <person name="Yoshida K."/>
            <person name="Yoshikawa H.-F."/>
            <person name="Zumstein E."/>
            <person name="Yoshikawa H."/>
            <person name="Danchin A."/>
        </authorList>
    </citation>
    <scope>NUCLEOTIDE SEQUENCE [LARGE SCALE GENOMIC DNA]</scope>
    <source>
        <strain>168</strain>
    </source>
</reference>
<reference key="2">
    <citation type="journal article" date="2006" name="Cell">
        <title>A three-protein signaling pathway governing immunity to a bacterial cannibalism toxin.</title>
        <authorList>
            <person name="Ellermeier C.D."/>
            <person name="Hobbs E.C."/>
            <person name="Gonzalez-Pastor J.E."/>
            <person name="Losick R."/>
        </authorList>
    </citation>
    <scope>FUNCTION</scope>
    <scope>INDUCTION</scope>
    <scope>SUBCELLULAR LOCATION</scope>
    <source>
        <strain>168 / PY79</strain>
    </source>
</reference>
<reference key="3">
    <citation type="journal article" date="2013" name="J. Bacteriol.">
        <title>Production of the cannibalism toxin SDP is a multistep process that requires SdpA and SdpB.</title>
        <authorList>
            <person name="Perez Morales T.G."/>
            <person name="Ho T.D."/>
            <person name="Liu W.T."/>
            <person name="Dorrestein P.C."/>
            <person name="Ellermeier C.D."/>
        </authorList>
    </citation>
    <scope>INDUCTION</scope>
    <source>
        <strain>168 / PY79</strain>
    </source>
</reference>
<organism>
    <name type="scientific">Bacillus subtilis (strain 168)</name>
    <dbReference type="NCBI Taxonomy" id="224308"/>
    <lineage>
        <taxon>Bacteria</taxon>
        <taxon>Bacillati</taxon>
        <taxon>Bacillota</taxon>
        <taxon>Bacilli</taxon>
        <taxon>Bacillales</taxon>
        <taxon>Bacillaceae</taxon>
        <taxon>Bacillus</taxon>
    </lineage>
</organism>
<accession>O32242</accession>
<sequence length="90" mass="10243">MNNVFKAISDPTRRKILDLLKGGDMTAGDIAEHFNISKPSISHHLNILKQAEVISDHRKGQFIYYSLNTTVLQDSINWMLNFINKGDNDL</sequence>
<dbReference type="EMBL" id="AL009126">
    <property type="protein sequence ID" value="CAB15384.1"/>
    <property type="molecule type" value="Genomic_DNA"/>
</dbReference>
<dbReference type="PIR" id="D70029">
    <property type="entry name" value="D70029"/>
</dbReference>
<dbReference type="RefSeq" id="NP_391259.1">
    <property type="nucleotide sequence ID" value="NC_000964.3"/>
</dbReference>
<dbReference type="RefSeq" id="WP_003243541.1">
    <property type="nucleotide sequence ID" value="NZ_OZ025638.1"/>
</dbReference>
<dbReference type="SMR" id="O32242"/>
<dbReference type="FunCoup" id="O32242">
    <property type="interactions" value="74"/>
</dbReference>
<dbReference type="STRING" id="224308.BSU33790"/>
<dbReference type="PaxDb" id="224308-BSU33790"/>
<dbReference type="EnsemblBacteria" id="CAB15384">
    <property type="protein sequence ID" value="CAB15384"/>
    <property type="gene ID" value="BSU_33790"/>
</dbReference>
<dbReference type="GeneID" id="936249"/>
<dbReference type="KEGG" id="bsu:BSU33790"/>
<dbReference type="PATRIC" id="fig|224308.179.peg.3664"/>
<dbReference type="eggNOG" id="COG0640">
    <property type="taxonomic scope" value="Bacteria"/>
</dbReference>
<dbReference type="InParanoid" id="O32242"/>
<dbReference type="OrthoDB" id="9799175at2"/>
<dbReference type="PhylomeDB" id="O32242"/>
<dbReference type="BioCyc" id="BSUB:BSU33790-MONOMER"/>
<dbReference type="Proteomes" id="UP000001570">
    <property type="component" value="Chromosome"/>
</dbReference>
<dbReference type="GO" id="GO:0005737">
    <property type="term" value="C:cytoplasm"/>
    <property type="evidence" value="ECO:0007669"/>
    <property type="project" value="UniProtKB-SubCell"/>
</dbReference>
<dbReference type="GO" id="GO:0003677">
    <property type="term" value="F:DNA binding"/>
    <property type="evidence" value="ECO:0007669"/>
    <property type="project" value="UniProtKB-KW"/>
</dbReference>
<dbReference type="GO" id="GO:0003700">
    <property type="term" value="F:DNA-binding transcription factor activity"/>
    <property type="evidence" value="ECO:0007669"/>
    <property type="project" value="InterPro"/>
</dbReference>
<dbReference type="GO" id="GO:0006355">
    <property type="term" value="P:regulation of DNA-templated transcription"/>
    <property type="evidence" value="ECO:0000318"/>
    <property type="project" value="GO_Central"/>
</dbReference>
<dbReference type="CDD" id="cd00090">
    <property type="entry name" value="HTH_ARSR"/>
    <property type="match status" value="1"/>
</dbReference>
<dbReference type="FunFam" id="1.10.10.10:FF:000423">
    <property type="entry name" value="Transcriptional regulator ArsR"/>
    <property type="match status" value="1"/>
</dbReference>
<dbReference type="Gene3D" id="1.10.10.10">
    <property type="entry name" value="Winged helix-like DNA-binding domain superfamily/Winged helix DNA-binding domain"/>
    <property type="match status" value="1"/>
</dbReference>
<dbReference type="InterPro" id="IPR011991">
    <property type="entry name" value="ArsR-like_HTH"/>
</dbReference>
<dbReference type="InterPro" id="IPR001845">
    <property type="entry name" value="HTH_ArsR_DNA-bd_dom"/>
</dbReference>
<dbReference type="InterPro" id="IPR051081">
    <property type="entry name" value="HTH_MetalResp_TranReg"/>
</dbReference>
<dbReference type="InterPro" id="IPR047796">
    <property type="entry name" value="SdpR-like_repress"/>
</dbReference>
<dbReference type="InterPro" id="IPR036388">
    <property type="entry name" value="WH-like_DNA-bd_sf"/>
</dbReference>
<dbReference type="InterPro" id="IPR036390">
    <property type="entry name" value="WH_DNA-bd_sf"/>
</dbReference>
<dbReference type="NCBIfam" id="NF033788">
    <property type="entry name" value="HTH_metalloreg"/>
    <property type="match status" value="1"/>
</dbReference>
<dbReference type="NCBIfam" id="NF033789">
    <property type="entry name" value="repress_SdpR"/>
    <property type="match status" value="1"/>
</dbReference>
<dbReference type="PANTHER" id="PTHR33154">
    <property type="entry name" value="TRANSCRIPTIONAL REGULATOR, ARSR FAMILY"/>
    <property type="match status" value="1"/>
</dbReference>
<dbReference type="PANTHER" id="PTHR33154:SF33">
    <property type="entry name" value="TRANSCRIPTIONAL REPRESSOR SDPR"/>
    <property type="match status" value="1"/>
</dbReference>
<dbReference type="Pfam" id="PF01022">
    <property type="entry name" value="HTH_5"/>
    <property type="match status" value="1"/>
</dbReference>
<dbReference type="PRINTS" id="PR00778">
    <property type="entry name" value="HTHARSR"/>
</dbReference>
<dbReference type="SMART" id="SM00418">
    <property type="entry name" value="HTH_ARSR"/>
    <property type="match status" value="1"/>
</dbReference>
<dbReference type="SUPFAM" id="SSF46785">
    <property type="entry name" value="Winged helix' DNA-binding domain"/>
    <property type="match status" value="1"/>
</dbReference>
<dbReference type="PROSITE" id="PS50987">
    <property type="entry name" value="HTH_ARSR_2"/>
    <property type="match status" value="1"/>
</dbReference>
<proteinExistence type="evidence at transcript level"/>
<protein>
    <recommendedName>
        <fullName>Transcriptional repressor SdpR</fullName>
    </recommendedName>
</protein>
<feature type="chain" id="PRO_0000312745" description="Transcriptional repressor SdpR">
    <location>
        <begin position="1"/>
        <end position="90"/>
    </location>
</feature>
<feature type="domain" description="HTH arsR-type" evidence="1">
    <location>
        <begin position="1"/>
        <end position="87"/>
    </location>
</feature>
<feature type="DNA-binding region" description="H-T-H motif" evidence="1">
    <location>
        <begin position="39"/>
        <end position="62"/>
    </location>
</feature>
<name>SDPR_BACSU</name>
<gene>
    <name type="primary">sdpR</name>
    <name type="synonym">yvbA</name>
    <name type="ordered locus">BSU33790</name>
</gene>
<comment type="function">
    <text evidence="2">Represses the transcription of the sdpIR operon and of several other operons that probably contribute to delaying commitment to sporulation.</text>
</comment>
<comment type="subcellular location">
    <subcellularLocation>
        <location evidence="2">Cytoplasm</location>
    </subcellularLocation>
    <text>Sequestred at the bacterial membrane by SdpC-bound SdpI.</text>
</comment>
<comment type="induction">
    <text evidence="2">By Spo0A during nutrient starvation through its direct negative control of AbrB, repressed by AbrB during regular growth when nutrients are plentiful (PubMed:16469701). Represses its own transcription (PubMed:16469701). Induced by expression of SDP (active peptide of sdpC) (PubMed:16469701, PubMed:23687264).</text>
</comment>
<keyword id="KW-0963">Cytoplasm</keyword>
<keyword id="KW-0238">DNA-binding</keyword>
<keyword id="KW-1185">Reference proteome</keyword>
<keyword id="KW-0678">Repressor</keyword>
<keyword id="KW-0804">Transcription</keyword>
<keyword id="KW-0805">Transcription regulation</keyword>